<sequence>MNYLIFKVIYANANIVVGEHNFIGYQIRIPKDYELEINKFCKLYLYEYISIMPNKNLIIKDLYGFRTYNERLLFIDLISINSIGPKTAINILKYDIDTIIDAIATKNIDYLITIKGINQRNANLICDQLNYKYINKVNDKNNWAKELSIGLENLGYTKKDIEYAITKVKINSQQDIDISEIISSAIKEISLRHEN</sequence>
<keyword id="KW-0963">Cytoplasm</keyword>
<keyword id="KW-0227">DNA damage</keyword>
<keyword id="KW-0233">DNA recombination</keyword>
<keyword id="KW-0234">DNA repair</keyword>
<keyword id="KW-0238">DNA-binding</keyword>
<keyword id="KW-1185">Reference proteome</keyword>
<proteinExistence type="inferred from homology"/>
<feature type="chain" id="PRO_0000094705" description="Holliday junction branch migration complex subunit RuvA">
    <location>
        <begin position="1"/>
        <end position="195"/>
    </location>
</feature>
<feature type="region of interest" description="Domain I" evidence="1">
    <location>
        <begin position="1"/>
        <end position="66"/>
    </location>
</feature>
<feature type="region of interest" description="Domain II" evidence="1">
    <location>
        <begin position="67"/>
        <end position="141"/>
    </location>
</feature>
<feature type="region of interest" description="Domain III" evidence="1">
    <location>
        <begin position="141"/>
        <end position="195"/>
    </location>
</feature>
<feature type="region of interest" description="Flexible linker" evidence="1">
    <location>
        <position position="141"/>
    </location>
</feature>
<dbReference type="EMBL" id="AF222894">
    <property type="protein sequence ID" value="AAF30861.1"/>
    <property type="molecule type" value="Genomic_DNA"/>
</dbReference>
<dbReference type="RefSeq" id="WP_006688612.1">
    <property type="nucleotide sequence ID" value="NC_002162.1"/>
</dbReference>
<dbReference type="SMR" id="Q9PQ41"/>
<dbReference type="STRING" id="273119.UU449"/>
<dbReference type="EnsemblBacteria" id="AAF30861">
    <property type="protein sequence ID" value="AAF30861"/>
    <property type="gene ID" value="UU449"/>
</dbReference>
<dbReference type="GeneID" id="29672569"/>
<dbReference type="KEGG" id="uur:UU449"/>
<dbReference type="eggNOG" id="COG0632">
    <property type="taxonomic scope" value="Bacteria"/>
</dbReference>
<dbReference type="HOGENOM" id="CLU_087936_1_1_14"/>
<dbReference type="OrthoDB" id="5293449at2"/>
<dbReference type="Proteomes" id="UP000000423">
    <property type="component" value="Chromosome"/>
</dbReference>
<dbReference type="GO" id="GO:0005737">
    <property type="term" value="C:cytoplasm"/>
    <property type="evidence" value="ECO:0007669"/>
    <property type="project" value="UniProtKB-SubCell"/>
</dbReference>
<dbReference type="GO" id="GO:0009379">
    <property type="term" value="C:Holliday junction helicase complex"/>
    <property type="evidence" value="ECO:0007669"/>
    <property type="project" value="InterPro"/>
</dbReference>
<dbReference type="GO" id="GO:0048476">
    <property type="term" value="C:Holliday junction resolvase complex"/>
    <property type="evidence" value="ECO:0007669"/>
    <property type="project" value="UniProtKB-UniRule"/>
</dbReference>
<dbReference type="GO" id="GO:0005524">
    <property type="term" value="F:ATP binding"/>
    <property type="evidence" value="ECO:0007669"/>
    <property type="project" value="InterPro"/>
</dbReference>
<dbReference type="GO" id="GO:0000400">
    <property type="term" value="F:four-way junction DNA binding"/>
    <property type="evidence" value="ECO:0007669"/>
    <property type="project" value="UniProtKB-UniRule"/>
</dbReference>
<dbReference type="GO" id="GO:0009378">
    <property type="term" value="F:four-way junction helicase activity"/>
    <property type="evidence" value="ECO:0007669"/>
    <property type="project" value="InterPro"/>
</dbReference>
<dbReference type="GO" id="GO:0006310">
    <property type="term" value="P:DNA recombination"/>
    <property type="evidence" value="ECO:0007669"/>
    <property type="project" value="UniProtKB-UniRule"/>
</dbReference>
<dbReference type="GO" id="GO:0006281">
    <property type="term" value="P:DNA repair"/>
    <property type="evidence" value="ECO:0007669"/>
    <property type="project" value="UniProtKB-UniRule"/>
</dbReference>
<dbReference type="CDD" id="cd14332">
    <property type="entry name" value="UBA_RuvA_C"/>
    <property type="match status" value="1"/>
</dbReference>
<dbReference type="Gene3D" id="1.10.150.20">
    <property type="entry name" value="5' to 3' exonuclease, C-terminal subdomain"/>
    <property type="match status" value="1"/>
</dbReference>
<dbReference type="HAMAP" id="MF_00031">
    <property type="entry name" value="DNA_HJ_migration_RuvA"/>
    <property type="match status" value="1"/>
</dbReference>
<dbReference type="InterPro" id="IPR000085">
    <property type="entry name" value="RuvA"/>
</dbReference>
<dbReference type="InterPro" id="IPR010994">
    <property type="entry name" value="RuvA_2-like"/>
</dbReference>
<dbReference type="InterPro" id="IPR011114">
    <property type="entry name" value="RuvA_C"/>
</dbReference>
<dbReference type="NCBIfam" id="TIGR00084">
    <property type="entry name" value="ruvA"/>
    <property type="match status" value="1"/>
</dbReference>
<dbReference type="Pfam" id="PF14520">
    <property type="entry name" value="HHH_5"/>
    <property type="match status" value="1"/>
</dbReference>
<dbReference type="Pfam" id="PF07499">
    <property type="entry name" value="RuvA_C"/>
    <property type="match status" value="1"/>
</dbReference>
<dbReference type="SUPFAM" id="SSF47781">
    <property type="entry name" value="RuvA domain 2-like"/>
    <property type="match status" value="1"/>
</dbReference>
<evidence type="ECO:0000255" key="1">
    <source>
        <dbReference type="HAMAP-Rule" id="MF_00031"/>
    </source>
</evidence>
<name>RUVA_UREPA</name>
<organism>
    <name type="scientific">Ureaplasma parvum serovar 3 (strain ATCC 700970)</name>
    <dbReference type="NCBI Taxonomy" id="273119"/>
    <lineage>
        <taxon>Bacteria</taxon>
        <taxon>Bacillati</taxon>
        <taxon>Mycoplasmatota</taxon>
        <taxon>Mycoplasmoidales</taxon>
        <taxon>Mycoplasmoidaceae</taxon>
        <taxon>Ureaplasma</taxon>
    </lineage>
</organism>
<protein>
    <recommendedName>
        <fullName evidence="1">Holliday junction branch migration complex subunit RuvA</fullName>
    </recommendedName>
</protein>
<comment type="function">
    <text evidence="1">The RuvA-RuvB-RuvC complex processes Holliday junction (HJ) DNA during genetic recombination and DNA repair, while the RuvA-RuvB complex plays an important role in the rescue of blocked DNA replication forks via replication fork reversal (RFR). RuvA specifically binds to HJ cruciform DNA, conferring on it an open structure. The RuvB hexamer acts as an ATP-dependent pump, pulling dsDNA into and through the RuvAB complex. HJ branch migration allows RuvC to scan DNA until it finds its consensus sequence, where it cleaves and resolves the cruciform DNA.</text>
</comment>
<comment type="subunit">
    <text evidence="1">Homotetramer. Forms an RuvA(8)-RuvB(12)-Holliday junction (HJ) complex. HJ DNA is sandwiched between 2 RuvA tetramers; dsDNA enters through RuvA and exits via RuvB. An RuvB hexamer assembles on each DNA strand where it exits the tetramer. Each RuvB hexamer is contacted by two RuvA subunits (via domain III) on 2 adjacent RuvB subunits; this complex drives branch migration. In the full resolvosome a probable DNA-RuvA(4)-RuvB(12)-RuvC(2) complex forms which resolves the HJ.</text>
</comment>
<comment type="subcellular location">
    <subcellularLocation>
        <location evidence="1">Cytoplasm</location>
    </subcellularLocation>
</comment>
<comment type="domain">
    <text evidence="1">Has three domains with a flexible linker between the domains II and III and assumes an 'L' shape. Domain III is highly mobile and contacts RuvB.</text>
</comment>
<comment type="similarity">
    <text evidence="1">Belongs to the RuvA family.</text>
</comment>
<gene>
    <name evidence="1" type="primary">ruvA</name>
    <name type="ordered locus">UU449</name>
</gene>
<reference key="1">
    <citation type="journal article" date="2000" name="Nature">
        <title>The complete sequence of the mucosal pathogen Ureaplasma urealyticum.</title>
        <authorList>
            <person name="Glass J.I."/>
            <person name="Lefkowitz E.J."/>
            <person name="Glass J.S."/>
            <person name="Heiner C.R."/>
            <person name="Chen E.Y."/>
            <person name="Cassell G.H."/>
        </authorList>
    </citation>
    <scope>NUCLEOTIDE SEQUENCE [LARGE SCALE GENOMIC DNA]</scope>
    <source>
        <strain>ATCC 700970</strain>
    </source>
</reference>
<accession>Q9PQ41</accession>